<reference key="1">
    <citation type="journal article" date="1992" name="Virology">
        <title>Channel catfish virus: a new type of herpesvirus.</title>
        <authorList>
            <person name="Davison A.J."/>
        </authorList>
    </citation>
    <scope>NUCLEOTIDE SEQUENCE [LARGE SCALE GENOMIC DNA]</scope>
</reference>
<organismHost>
    <name type="scientific">Ictaluridae</name>
    <name type="common">bullhead catfishes</name>
    <dbReference type="NCBI Taxonomy" id="7996"/>
</organismHost>
<proteinExistence type="predicted"/>
<organism>
    <name type="scientific">Ictalurid herpesvirus 1 (strain Auburn)</name>
    <name type="common">IcHV-1</name>
    <name type="synonym">Channel catfish herpesvirus</name>
    <dbReference type="NCBI Taxonomy" id="766178"/>
    <lineage>
        <taxon>Viruses</taxon>
        <taxon>Duplodnaviria</taxon>
        <taxon>Heunggongvirae</taxon>
        <taxon>Peploviricota</taxon>
        <taxon>Herviviricetes</taxon>
        <taxon>Herpesvirales</taxon>
        <taxon>Alloherpesviridae</taxon>
        <taxon>Ictavirus</taxon>
        <taxon>Ictavirus ictaluridallo1</taxon>
        <taxon>Ictalurid herpesvirus 1</taxon>
    </lineage>
</organism>
<name>VG04_ICHVA</name>
<dbReference type="EMBL" id="M75136">
    <property type="protein sequence ID" value="AAA88185.1"/>
    <property type="molecule type" value="Genomic_DNA"/>
</dbReference>
<dbReference type="EMBL" id="M75136">
    <property type="protein sequence ID" value="AAA88107.1"/>
    <property type="molecule type" value="Genomic_DNA"/>
</dbReference>
<dbReference type="PIR" id="E36786">
    <property type="entry name" value="E36786"/>
</dbReference>
<dbReference type="KEGG" id="vg:1488375"/>
<dbReference type="KEGG" id="vg:1488380"/>
<dbReference type="Proteomes" id="UP000007643">
    <property type="component" value="Segment"/>
</dbReference>
<feature type="chain" id="PRO_0000222091" description="Uncharacterized protein ORF4">
    <location>
        <begin position="1"/>
        <end position="179"/>
    </location>
</feature>
<feature type="region of interest" description="Disordered" evidence="1">
    <location>
        <begin position="53"/>
        <end position="82"/>
    </location>
</feature>
<feature type="compositionally biased region" description="Basic and acidic residues" evidence="1">
    <location>
        <begin position="54"/>
        <end position="67"/>
    </location>
</feature>
<evidence type="ECO:0000256" key="1">
    <source>
        <dbReference type="SAM" id="MobiDB-lite"/>
    </source>
</evidence>
<protein>
    <recommendedName>
        <fullName>Uncharacterized protein ORF4</fullName>
    </recommendedName>
</protein>
<accession>Q00108</accession>
<keyword id="KW-1185">Reference proteome</keyword>
<sequence length="179" mass="19644">MASIDVGETIGIEQVEPVKFRFVCHCGFCPPSFVTARGAGSVSLRVVVHYVPSPEREDPESPTRGVDEVDGACSEPPTPRPEPRFRAIEEMGKIVVLVSVCPLRPALQHRWVGAPARRHRSDSVARRARFEPWRGRASRPTVLTPASGDSDDVDTRTFGCGCGPGHPPVDCMCDRQDWL</sequence>
<gene>
    <name type="primary">ORF4</name>
</gene>